<reference key="1">
    <citation type="submission" date="2007-10" db="EMBL/GenBank/DDBJ databases">
        <title>Complete sequence of Methanococcus maripaludis C6.</title>
        <authorList>
            <consortium name="US DOE Joint Genome Institute"/>
            <person name="Copeland A."/>
            <person name="Lucas S."/>
            <person name="Lapidus A."/>
            <person name="Barry K."/>
            <person name="Glavina del Rio T."/>
            <person name="Dalin E."/>
            <person name="Tice H."/>
            <person name="Pitluck S."/>
            <person name="Clum A."/>
            <person name="Schmutz J."/>
            <person name="Larimer F."/>
            <person name="Land M."/>
            <person name="Hauser L."/>
            <person name="Kyrpides N."/>
            <person name="Mikhailova N."/>
            <person name="Sieprawska-Lupa M."/>
            <person name="Whitman W.B."/>
            <person name="Richardson P."/>
        </authorList>
    </citation>
    <scope>NUCLEOTIDE SEQUENCE [LARGE SCALE GENOMIC DNA]</scope>
    <source>
        <strain>C6 / ATCC BAA-1332</strain>
    </source>
</reference>
<feature type="chain" id="PRO_1000091787" description="MEMO1 family protein MmarC6_1286">
    <location>
        <begin position="1"/>
        <end position="284"/>
    </location>
</feature>
<proteinExistence type="inferred from homology"/>
<organism>
    <name type="scientific">Methanococcus maripaludis (strain C6 / ATCC BAA-1332)</name>
    <dbReference type="NCBI Taxonomy" id="444158"/>
    <lineage>
        <taxon>Archaea</taxon>
        <taxon>Methanobacteriati</taxon>
        <taxon>Methanobacteriota</taxon>
        <taxon>Methanomada group</taxon>
        <taxon>Methanococci</taxon>
        <taxon>Methanococcales</taxon>
        <taxon>Methanococcaceae</taxon>
        <taxon>Methanococcus</taxon>
    </lineage>
</organism>
<comment type="similarity">
    <text evidence="1">Belongs to the MEMO1 family.</text>
</comment>
<evidence type="ECO:0000255" key="1">
    <source>
        <dbReference type="HAMAP-Rule" id="MF_00055"/>
    </source>
</evidence>
<gene>
    <name type="ordered locus">MmarC6_1286</name>
</gene>
<protein>
    <recommendedName>
        <fullName evidence="1">MEMO1 family protein MmarC6_1286</fullName>
    </recommendedName>
</protein>
<dbReference type="EMBL" id="CP000867">
    <property type="protein sequence ID" value="ABX02099.1"/>
    <property type="molecule type" value="Genomic_DNA"/>
</dbReference>
<dbReference type="SMR" id="A9A9S6"/>
<dbReference type="STRING" id="444158.MmarC6_1286"/>
<dbReference type="KEGG" id="mmx:MmarC6_1286"/>
<dbReference type="eggNOG" id="arCOG01728">
    <property type="taxonomic scope" value="Archaea"/>
</dbReference>
<dbReference type="HOGENOM" id="CLU_038085_2_0_2"/>
<dbReference type="OrthoDB" id="372162at2157"/>
<dbReference type="PhylomeDB" id="A9A9S6"/>
<dbReference type="CDD" id="cd07361">
    <property type="entry name" value="MEMO_like"/>
    <property type="match status" value="1"/>
</dbReference>
<dbReference type="Gene3D" id="3.40.830.10">
    <property type="entry name" value="LigB-like"/>
    <property type="match status" value="1"/>
</dbReference>
<dbReference type="HAMAP" id="MF_00055">
    <property type="entry name" value="MEMO1"/>
    <property type="match status" value="1"/>
</dbReference>
<dbReference type="InterPro" id="IPR002737">
    <property type="entry name" value="MEMO1_fam"/>
</dbReference>
<dbReference type="NCBIfam" id="TIGR04336">
    <property type="entry name" value="AmmeMemoSam_B"/>
    <property type="match status" value="1"/>
</dbReference>
<dbReference type="NCBIfam" id="NF001987">
    <property type="entry name" value="PRK00782.1"/>
    <property type="match status" value="1"/>
</dbReference>
<dbReference type="PANTHER" id="PTHR11060">
    <property type="entry name" value="PROTEIN MEMO1"/>
    <property type="match status" value="1"/>
</dbReference>
<dbReference type="PANTHER" id="PTHR11060:SF0">
    <property type="entry name" value="PROTEIN MEMO1"/>
    <property type="match status" value="1"/>
</dbReference>
<dbReference type="Pfam" id="PF01875">
    <property type="entry name" value="Memo"/>
    <property type="match status" value="1"/>
</dbReference>
<accession>A9A9S6</accession>
<sequence length="284" mass="31774">MKRNPVVAGMFYPAEYHELLEMIEYCYLSPRGPKELPSKRGNYTKPLGIVSPHAGYIYSGPVAAHGYKKISENVSGEVTAIILGPNHTGLGSGISTMKGIWKTPFGDMEIDNEFADKLWKECDVLDIDENSHLREHSIEVQLPFLKHLEDLNIAKFKFVPISMMMQDYETSIDVGYFIAKVAKEMNRKIIIIASTDFSHYEPQESASKKDAIVIKDILELKDEEIFIDVVTHNISMCGYGPVIAMVKAMKDLGAKTANLLYYSTSGDVTKDYSEVVGYASILVK</sequence>
<name>Y1286_METM6</name>